<proteinExistence type="inferred from homology"/>
<feature type="chain" id="PRO_1000085304" description="Chaperone protein DnaJ">
    <location>
        <begin position="1"/>
        <end position="376"/>
    </location>
</feature>
<feature type="domain" description="J" evidence="1">
    <location>
        <begin position="5"/>
        <end position="70"/>
    </location>
</feature>
<feature type="repeat" description="CXXCXGXG motif">
    <location>
        <begin position="144"/>
        <end position="151"/>
    </location>
</feature>
<feature type="repeat" description="CXXCXGXG motif">
    <location>
        <begin position="161"/>
        <end position="168"/>
    </location>
</feature>
<feature type="repeat" description="CXXCXGXG motif">
    <location>
        <begin position="183"/>
        <end position="190"/>
    </location>
</feature>
<feature type="repeat" description="CXXCXGXG motif">
    <location>
        <begin position="197"/>
        <end position="204"/>
    </location>
</feature>
<feature type="zinc finger region" description="CR-type" evidence="1">
    <location>
        <begin position="131"/>
        <end position="209"/>
    </location>
</feature>
<feature type="binding site" evidence="1">
    <location>
        <position position="144"/>
    </location>
    <ligand>
        <name>Zn(2+)</name>
        <dbReference type="ChEBI" id="CHEBI:29105"/>
        <label>1</label>
    </ligand>
</feature>
<feature type="binding site" evidence="1">
    <location>
        <position position="147"/>
    </location>
    <ligand>
        <name>Zn(2+)</name>
        <dbReference type="ChEBI" id="CHEBI:29105"/>
        <label>1</label>
    </ligand>
</feature>
<feature type="binding site" evidence="1">
    <location>
        <position position="161"/>
    </location>
    <ligand>
        <name>Zn(2+)</name>
        <dbReference type="ChEBI" id="CHEBI:29105"/>
        <label>2</label>
    </ligand>
</feature>
<feature type="binding site" evidence="1">
    <location>
        <position position="164"/>
    </location>
    <ligand>
        <name>Zn(2+)</name>
        <dbReference type="ChEBI" id="CHEBI:29105"/>
        <label>2</label>
    </ligand>
</feature>
<feature type="binding site" evidence="1">
    <location>
        <position position="183"/>
    </location>
    <ligand>
        <name>Zn(2+)</name>
        <dbReference type="ChEBI" id="CHEBI:29105"/>
        <label>2</label>
    </ligand>
</feature>
<feature type="binding site" evidence="1">
    <location>
        <position position="186"/>
    </location>
    <ligand>
        <name>Zn(2+)</name>
        <dbReference type="ChEBI" id="CHEBI:29105"/>
        <label>2</label>
    </ligand>
</feature>
<feature type="binding site" evidence="1">
    <location>
        <position position="197"/>
    </location>
    <ligand>
        <name>Zn(2+)</name>
        <dbReference type="ChEBI" id="CHEBI:29105"/>
        <label>1</label>
    </ligand>
</feature>
<feature type="binding site" evidence="1">
    <location>
        <position position="200"/>
    </location>
    <ligand>
        <name>Zn(2+)</name>
        <dbReference type="ChEBI" id="CHEBI:29105"/>
        <label>1</label>
    </ligand>
</feature>
<sequence>MAKQDYYEILGVSKTAEEREIKKAYKRLAMKYHPDRNQGDKEAEAKFKEIKEAYEVLTDSQKRAAYDQYGHAAFEQGGMGGGGFGGGADFSDIFGDVFGDIFGGGRGRQRAARGADLRYNMELTLEEAVRGVTKEIRIPTLEECDVCHGSGAKPGTQPQTCPTCHGSGQVQMRQGFFAVQQTCPHCQGRGTLIKDPCNKCHGHGRVERSKTLSVKIPAGVDTGDRIRLAGEGEAGEHGAPAGDLYVQVQVKQHPIFEREGNNLYCEVPINFAMAALGGEIEVPTLDGRVKLKVPGETQTGKLFRMRGKGVKSVRGGAQGDLLCRVVVETPVGLNEKQKQLLQELQESFGGPTGEHNSPRSKSFFDGVKKFFDDLTR</sequence>
<comment type="function">
    <text evidence="1">Participates actively in the response to hyperosmotic and heat shock by preventing the aggregation of stress-denatured proteins and by disaggregating proteins, also in an autonomous, DnaK-independent fashion. Unfolded proteins bind initially to DnaJ; upon interaction with the DnaJ-bound protein, DnaK hydrolyzes its bound ATP, resulting in the formation of a stable complex. GrpE releases ADP from DnaK; ATP binding to DnaK triggers the release of the substrate protein, thus completing the reaction cycle. Several rounds of ATP-dependent interactions between DnaJ, DnaK and GrpE are required for fully efficient folding. Also involved, together with DnaK and GrpE, in the DNA replication of plasmids through activation of initiation proteins.</text>
</comment>
<comment type="cofactor">
    <cofactor evidence="1">
        <name>Zn(2+)</name>
        <dbReference type="ChEBI" id="CHEBI:29105"/>
    </cofactor>
    <text evidence="1">Binds 2 Zn(2+) ions per monomer.</text>
</comment>
<comment type="subunit">
    <text evidence="1">Homodimer.</text>
</comment>
<comment type="subcellular location">
    <subcellularLocation>
        <location evidence="1">Cytoplasm</location>
    </subcellularLocation>
</comment>
<comment type="domain">
    <text evidence="1">The J domain is necessary and sufficient to stimulate DnaK ATPase activity. Zinc center 1 plays an important role in the autonomous, DnaK-independent chaperone activity of DnaJ. Zinc center 2 is essential for interaction with DnaK and for DnaJ activity.</text>
</comment>
<comment type="similarity">
    <text evidence="1">Belongs to the DnaJ family.</text>
</comment>
<accession>Q3Z600</accession>
<gene>
    <name evidence="1" type="primary">dnaJ</name>
    <name type="ordered locus">SSON_0015</name>
</gene>
<organism>
    <name type="scientific">Shigella sonnei (strain Ss046)</name>
    <dbReference type="NCBI Taxonomy" id="300269"/>
    <lineage>
        <taxon>Bacteria</taxon>
        <taxon>Pseudomonadati</taxon>
        <taxon>Pseudomonadota</taxon>
        <taxon>Gammaproteobacteria</taxon>
        <taxon>Enterobacterales</taxon>
        <taxon>Enterobacteriaceae</taxon>
        <taxon>Shigella</taxon>
    </lineage>
</organism>
<keyword id="KW-0143">Chaperone</keyword>
<keyword id="KW-0963">Cytoplasm</keyword>
<keyword id="KW-0235">DNA replication</keyword>
<keyword id="KW-0479">Metal-binding</keyword>
<keyword id="KW-1185">Reference proteome</keyword>
<keyword id="KW-0677">Repeat</keyword>
<keyword id="KW-0346">Stress response</keyword>
<keyword id="KW-0862">Zinc</keyword>
<keyword id="KW-0863">Zinc-finger</keyword>
<protein>
    <recommendedName>
        <fullName evidence="1">Chaperone protein DnaJ</fullName>
    </recommendedName>
</protein>
<dbReference type="EMBL" id="CP000038">
    <property type="protein sequence ID" value="AAZ86812.1"/>
    <property type="molecule type" value="Genomic_DNA"/>
</dbReference>
<dbReference type="RefSeq" id="WP_001118464.1">
    <property type="nucleotide sequence ID" value="NC_007384.1"/>
</dbReference>
<dbReference type="SMR" id="Q3Z600"/>
<dbReference type="GeneID" id="93777428"/>
<dbReference type="KEGG" id="ssn:SSON_0015"/>
<dbReference type="HOGENOM" id="CLU_017633_0_7_6"/>
<dbReference type="Proteomes" id="UP000002529">
    <property type="component" value="Chromosome"/>
</dbReference>
<dbReference type="GO" id="GO:0005737">
    <property type="term" value="C:cytoplasm"/>
    <property type="evidence" value="ECO:0007669"/>
    <property type="project" value="UniProtKB-SubCell"/>
</dbReference>
<dbReference type="GO" id="GO:0005524">
    <property type="term" value="F:ATP binding"/>
    <property type="evidence" value="ECO:0007669"/>
    <property type="project" value="InterPro"/>
</dbReference>
<dbReference type="GO" id="GO:0031072">
    <property type="term" value="F:heat shock protein binding"/>
    <property type="evidence" value="ECO:0007669"/>
    <property type="project" value="InterPro"/>
</dbReference>
<dbReference type="GO" id="GO:0051082">
    <property type="term" value="F:unfolded protein binding"/>
    <property type="evidence" value="ECO:0007669"/>
    <property type="project" value="UniProtKB-UniRule"/>
</dbReference>
<dbReference type="GO" id="GO:0008270">
    <property type="term" value="F:zinc ion binding"/>
    <property type="evidence" value="ECO:0007669"/>
    <property type="project" value="UniProtKB-UniRule"/>
</dbReference>
<dbReference type="GO" id="GO:0051085">
    <property type="term" value="P:chaperone cofactor-dependent protein refolding"/>
    <property type="evidence" value="ECO:0007669"/>
    <property type="project" value="TreeGrafter"/>
</dbReference>
<dbReference type="GO" id="GO:0006260">
    <property type="term" value="P:DNA replication"/>
    <property type="evidence" value="ECO:0007669"/>
    <property type="project" value="UniProtKB-KW"/>
</dbReference>
<dbReference type="GO" id="GO:0042026">
    <property type="term" value="P:protein refolding"/>
    <property type="evidence" value="ECO:0007669"/>
    <property type="project" value="TreeGrafter"/>
</dbReference>
<dbReference type="GO" id="GO:0009408">
    <property type="term" value="P:response to heat"/>
    <property type="evidence" value="ECO:0007669"/>
    <property type="project" value="InterPro"/>
</dbReference>
<dbReference type="CDD" id="cd06257">
    <property type="entry name" value="DnaJ"/>
    <property type="match status" value="1"/>
</dbReference>
<dbReference type="CDD" id="cd10747">
    <property type="entry name" value="DnaJ_C"/>
    <property type="match status" value="1"/>
</dbReference>
<dbReference type="CDD" id="cd10719">
    <property type="entry name" value="DnaJ_zf"/>
    <property type="match status" value="1"/>
</dbReference>
<dbReference type="FunFam" id="1.10.287.110:FF:000003">
    <property type="entry name" value="Molecular chaperone DnaJ"/>
    <property type="match status" value="1"/>
</dbReference>
<dbReference type="FunFam" id="2.10.230.10:FF:000002">
    <property type="entry name" value="Molecular chaperone DnaJ"/>
    <property type="match status" value="1"/>
</dbReference>
<dbReference type="FunFam" id="2.60.260.20:FF:000004">
    <property type="entry name" value="Molecular chaperone DnaJ"/>
    <property type="match status" value="1"/>
</dbReference>
<dbReference type="Gene3D" id="1.10.287.110">
    <property type="entry name" value="DnaJ domain"/>
    <property type="match status" value="1"/>
</dbReference>
<dbReference type="Gene3D" id="2.10.230.10">
    <property type="entry name" value="Heat shock protein DnaJ, cysteine-rich domain"/>
    <property type="match status" value="1"/>
</dbReference>
<dbReference type="Gene3D" id="2.60.260.20">
    <property type="entry name" value="Urease metallochaperone UreE, N-terminal domain"/>
    <property type="match status" value="2"/>
</dbReference>
<dbReference type="HAMAP" id="MF_01152">
    <property type="entry name" value="DnaJ"/>
    <property type="match status" value="1"/>
</dbReference>
<dbReference type="InterPro" id="IPR012724">
    <property type="entry name" value="DnaJ"/>
</dbReference>
<dbReference type="InterPro" id="IPR002939">
    <property type="entry name" value="DnaJ_C"/>
</dbReference>
<dbReference type="InterPro" id="IPR001623">
    <property type="entry name" value="DnaJ_domain"/>
</dbReference>
<dbReference type="InterPro" id="IPR018253">
    <property type="entry name" value="DnaJ_domain_CS"/>
</dbReference>
<dbReference type="InterPro" id="IPR008971">
    <property type="entry name" value="HSP40/DnaJ_pept-bd"/>
</dbReference>
<dbReference type="InterPro" id="IPR001305">
    <property type="entry name" value="HSP_DnaJ_Cys-rich_dom"/>
</dbReference>
<dbReference type="InterPro" id="IPR036410">
    <property type="entry name" value="HSP_DnaJ_Cys-rich_dom_sf"/>
</dbReference>
<dbReference type="InterPro" id="IPR036869">
    <property type="entry name" value="J_dom_sf"/>
</dbReference>
<dbReference type="NCBIfam" id="TIGR02349">
    <property type="entry name" value="DnaJ_bact"/>
    <property type="match status" value="1"/>
</dbReference>
<dbReference type="NCBIfam" id="NF008035">
    <property type="entry name" value="PRK10767.1"/>
    <property type="match status" value="1"/>
</dbReference>
<dbReference type="PANTHER" id="PTHR43096:SF48">
    <property type="entry name" value="CHAPERONE PROTEIN DNAJ"/>
    <property type="match status" value="1"/>
</dbReference>
<dbReference type="PANTHER" id="PTHR43096">
    <property type="entry name" value="DNAJ HOMOLOG 1, MITOCHONDRIAL-RELATED"/>
    <property type="match status" value="1"/>
</dbReference>
<dbReference type="Pfam" id="PF00226">
    <property type="entry name" value="DnaJ"/>
    <property type="match status" value="1"/>
</dbReference>
<dbReference type="Pfam" id="PF01556">
    <property type="entry name" value="DnaJ_C"/>
    <property type="match status" value="1"/>
</dbReference>
<dbReference type="Pfam" id="PF00684">
    <property type="entry name" value="DnaJ_CXXCXGXG"/>
    <property type="match status" value="1"/>
</dbReference>
<dbReference type="PRINTS" id="PR00625">
    <property type="entry name" value="JDOMAIN"/>
</dbReference>
<dbReference type="SMART" id="SM00271">
    <property type="entry name" value="DnaJ"/>
    <property type="match status" value="1"/>
</dbReference>
<dbReference type="SUPFAM" id="SSF46565">
    <property type="entry name" value="Chaperone J-domain"/>
    <property type="match status" value="1"/>
</dbReference>
<dbReference type="SUPFAM" id="SSF57938">
    <property type="entry name" value="DnaJ/Hsp40 cysteine-rich domain"/>
    <property type="match status" value="1"/>
</dbReference>
<dbReference type="SUPFAM" id="SSF49493">
    <property type="entry name" value="HSP40/DnaJ peptide-binding domain"/>
    <property type="match status" value="2"/>
</dbReference>
<dbReference type="PROSITE" id="PS00636">
    <property type="entry name" value="DNAJ_1"/>
    <property type="match status" value="1"/>
</dbReference>
<dbReference type="PROSITE" id="PS50076">
    <property type="entry name" value="DNAJ_2"/>
    <property type="match status" value="1"/>
</dbReference>
<dbReference type="PROSITE" id="PS51188">
    <property type="entry name" value="ZF_CR"/>
    <property type="match status" value="1"/>
</dbReference>
<name>DNAJ_SHISS</name>
<reference key="1">
    <citation type="journal article" date="2005" name="Nucleic Acids Res.">
        <title>Genome dynamics and diversity of Shigella species, the etiologic agents of bacillary dysentery.</title>
        <authorList>
            <person name="Yang F."/>
            <person name="Yang J."/>
            <person name="Zhang X."/>
            <person name="Chen L."/>
            <person name="Jiang Y."/>
            <person name="Yan Y."/>
            <person name="Tang X."/>
            <person name="Wang J."/>
            <person name="Xiong Z."/>
            <person name="Dong J."/>
            <person name="Xue Y."/>
            <person name="Zhu Y."/>
            <person name="Xu X."/>
            <person name="Sun L."/>
            <person name="Chen S."/>
            <person name="Nie H."/>
            <person name="Peng J."/>
            <person name="Xu J."/>
            <person name="Wang Y."/>
            <person name="Yuan Z."/>
            <person name="Wen Y."/>
            <person name="Yao Z."/>
            <person name="Shen Y."/>
            <person name="Qiang B."/>
            <person name="Hou Y."/>
            <person name="Yu J."/>
            <person name="Jin Q."/>
        </authorList>
    </citation>
    <scope>NUCLEOTIDE SEQUENCE [LARGE SCALE GENOMIC DNA]</scope>
    <source>
        <strain>Ss046</strain>
    </source>
</reference>
<evidence type="ECO:0000255" key="1">
    <source>
        <dbReference type="HAMAP-Rule" id="MF_01152"/>
    </source>
</evidence>